<comment type="function">
    <text evidence="1">Chaperone involved in the maturation of iron-sulfur cluster-containing proteins. Has a low intrinsic ATPase activity which is markedly stimulated by HscB. Involved in the maturation of IscU.</text>
</comment>
<comment type="similarity">
    <text evidence="1">Belongs to the heat shock protein 70 family.</text>
</comment>
<reference key="1">
    <citation type="journal article" date="2002" name="Nucleic Acids Res.">
        <title>Genome sequence of Shigella flexneri 2a: insights into pathogenicity through comparison with genomes of Escherichia coli K12 and O157.</title>
        <authorList>
            <person name="Jin Q."/>
            <person name="Yuan Z."/>
            <person name="Xu J."/>
            <person name="Wang Y."/>
            <person name="Shen Y."/>
            <person name="Lu W."/>
            <person name="Wang J."/>
            <person name="Liu H."/>
            <person name="Yang J."/>
            <person name="Yang F."/>
            <person name="Zhang X."/>
            <person name="Zhang J."/>
            <person name="Yang G."/>
            <person name="Wu H."/>
            <person name="Qu D."/>
            <person name="Dong J."/>
            <person name="Sun L."/>
            <person name="Xue Y."/>
            <person name="Zhao A."/>
            <person name="Gao Y."/>
            <person name="Zhu J."/>
            <person name="Kan B."/>
            <person name="Ding K."/>
            <person name="Chen S."/>
            <person name="Cheng H."/>
            <person name="Yao Z."/>
            <person name="He B."/>
            <person name="Chen R."/>
            <person name="Ma D."/>
            <person name="Qiang B."/>
            <person name="Wen Y."/>
            <person name="Hou Y."/>
            <person name="Yu J."/>
        </authorList>
    </citation>
    <scope>NUCLEOTIDE SEQUENCE [LARGE SCALE GENOMIC DNA]</scope>
    <source>
        <strain>301 / Serotype 2a</strain>
    </source>
</reference>
<reference key="2">
    <citation type="journal article" date="2003" name="Infect. Immun.">
        <title>Complete genome sequence and comparative genomics of Shigella flexneri serotype 2a strain 2457T.</title>
        <authorList>
            <person name="Wei J."/>
            <person name="Goldberg M.B."/>
            <person name="Burland V."/>
            <person name="Venkatesan M.M."/>
            <person name="Deng W."/>
            <person name="Fournier G."/>
            <person name="Mayhew G.F."/>
            <person name="Plunkett G. III"/>
            <person name="Rose D.J."/>
            <person name="Darling A."/>
            <person name="Mau B."/>
            <person name="Perna N.T."/>
            <person name="Payne S.M."/>
            <person name="Runyen-Janecky L.J."/>
            <person name="Zhou S."/>
            <person name="Schwartz D.C."/>
            <person name="Blattner F.R."/>
        </authorList>
    </citation>
    <scope>NUCLEOTIDE SEQUENCE [LARGE SCALE GENOMIC DNA]</scope>
    <source>
        <strain>ATCC 700930 / 2457T / Serotype 2a</strain>
    </source>
</reference>
<protein>
    <recommendedName>
        <fullName evidence="1">Chaperone protein HscA homolog</fullName>
    </recommendedName>
</protein>
<gene>
    <name evidence="1" type="primary">hscA</name>
    <name type="ordered locus">SF2573</name>
    <name type="ordered locus">S2745</name>
</gene>
<dbReference type="EMBL" id="AE005674">
    <property type="protein sequence ID" value="AAN44072.2"/>
    <property type="molecule type" value="Genomic_DNA"/>
</dbReference>
<dbReference type="EMBL" id="AE014073">
    <property type="protein sequence ID" value="AAP17897.1"/>
    <property type="molecule type" value="Genomic_DNA"/>
</dbReference>
<dbReference type="RefSeq" id="NP_708365.2">
    <property type="nucleotide sequence ID" value="NC_004337.2"/>
</dbReference>
<dbReference type="RefSeq" id="WP_001196601.1">
    <property type="nucleotide sequence ID" value="NZ_WPGW01000021.1"/>
</dbReference>
<dbReference type="SMR" id="Q83QK4"/>
<dbReference type="STRING" id="198214.SF2573"/>
<dbReference type="PaxDb" id="198214-SF2573"/>
<dbReference type="GeneID" id="1025920"/>
<dbReference type="KEGG" id="sfl:SF2573"/>
<dbReference type="KEGG" id="sfx:S2745"/>
<dbReference type="PATRIC" id="fig|198214.7.peg.3072"/>
<dbReference type="HOGENOM" id="CLU_005965_2_1_6"/>
<dbReference type="Proteomes" id="UP000001006">
    <property type="component" value="Chromosome"/>
</dbReference>
<dbReference type="Proteomes" id="UP000002673">
    <property type="component" value="Chromosome"/>
</dbReference>
<dbReference type="GO" id="GO:0005524">
    <property type="term" value="F:ATP binding"/>
    <property type="evidence" value="ECO:0007669"/>
    <property type="project" value="UniProtKB-KW"/>
</dbReference>
<dbReference type="GO" id="GO:0016887">
    <property type="term" value="F:ATP hydrolysis activity"/>
    <property type="evidence" value="ECO:0007669"/>
    <property type="project" value="UniProtKB-UniRule"/>
</dbReference>
<dbReference type="GO" id="GO:0140662">
    <property type="term" value="F:ATP-dependent protein folding chaperone"/>
    <property type="evidence" value="ECO:0007669"/>
    <property type="project" value="InterPro"/>
</dbReference>
<dbReference type="GO" id="GO:0051082">
    <property type="term" value="F:unfolded protein binding"/>
    <property type="evidence" value="ECO:0007669"/>
    <property type="project" value="InterPro"/>
</dbReference>
<dbReference type="GO" id="GO:0016226">
    <property type="term" value="P:iron-sulfur cluster assembly"/>
    <property type="evidence" value="ECO:0007669"/>
    <property type="project" value="InterPro"/>
</dbReference>
<dbReference type="CDD" id="cd10236">
    <property type="entry name" value="ASKHA_NBD_HSP70_HscA"/>
    <property type="match status" value="1"/>
</dbReference>
<dbReference type="FunFam" id="1.20.1270.10:FF:000006">
    <property type="entry name" value="Chaperone protein HscA"/>
    <property type="match status" value="1"/>
</dbReference>
<dbReference type="FunFam" id="3.30.420.40:FF:000046">
    <property type="entry name" value="Chaperone protein HscA"/>
    <property type="match status" value="1"/>
</dbReference>
<dbReference type="FunFam" id="3.90.640.10:FF:000013">
    <property type="entry name" value="Chaperone protein HscA"/>
    <property type="match status" value="1"/>
</dbReference>
<dbReference type="FunFam" id="2.60.34.10:FF:000005">
    <property type="entry name" value="Chaperone protein HscA homolog"/>
    <property type="match status" value="1"/>
</dbReference>
<dbReference type="FunFam" id="3.30.420.40:FF:000020">
    <property type="entry name" value="Chaperone protein HscA homolog"/>
    <property type="match status" value="1"/>
</dbReference>
<dbReference type="Gene3D" id="1.20.1270.10">
    <property type="match status" value="1"/>
</dbReference>
<dbReference type="Gene3D" id="3.30.420.40">
    <property type="match status" value="2"/>
</dbReference>
<dbReference type="Gene3D" id="3.90.640.10">
    <property type="entry name" value="Actin, Chain A, domain 4"/>
    <property type="match status" value="1"/>
</dbReference>
<dbReference type="Gene3D" id="2.60.34.10">
    <property type="entry name" value="Substrate Binding Domain Of DNAk, Chain A, domain 1"/>
    <property type="match status" value="1"/>
</dbReference>
<dbReference type="HAMAP" id="MF_00679">
    <property type="entry name" value="HscA"/>
    <property type="match status" value="1"/>
</dbReference>
<dbReference type="InterPro" id="IPR043129">
    <property type="entry name" value="ATPase_NBD"/>
</dbReference>
<dbReference type="InterPro" id="IPR018181">
    <property type="entry name" value="Heat_shock_70_CS"/>
</dbReference>
<dbReference type="InterPro" id="IPR042039">
    <property type="entry name" value="HscA_NBD"/>
</dbReference>
<dbReference type="InterPro" id="IPR029048">
    <property type="entry name" value="HSP70_C_sf"/>
</dbReference>
<dbReference type="InterPro" id="IPR029047">
    <property type="entry name" value="HSP70_peptide-bd_sf"/>
</dbReference>
<dbReference type="InterPro" id="IPR013126">
    <property type="entry name" value="Hsp_70_fam"/>
</dbReference>
<dbReference type="InterPro" id="IPR010236">
    <property type="entry name" value="ISC_FeS_clus_asmbl_HscA"/>
</dbReference>
<dbReference type="NCBIfam" id="TIGR01991">
    <property type="entry name" value="HscA"/>
    <property type="match status" value="1"/>
</dbReference>
<dbReference type="NCBIfam" id="NF003520">
    <property type="entry name" value="PRK05183.1"/>
    <property type="match status" value="1"/>
</dbReference>
<dbReference type="PANTHER" id="PTHR19375">
    <property type="entry name" value="HEAT SHOCK PROTEIN 70KDA"/>
    <property type="match status" value="1"/>
</dbReference>
<dbReference type="Pfam" id="PF00012">
    <property type="entry name" value="HSP70"/>
    <property type="match status" value="1"/>
</dbReference>
<dbReference type="PRINTS" id="PR00301">
    <property type="entry name" value="HEATSHOCK70"/>
</dbReference>
<dbReference type="SUPFAM" id="SSF53067">
    <property type="entry name" value="Actin-like ATPase domain"/>
    <property type="match status" value="2"/>
</dbReference>
<dbReference type="SUPFAM" id="SSF100934">
    <property type="entry name" value="Heat shock protein 70kD (HSP70), C-terminal subdomain"/>
    <property type="match status" value="1"/>
</dbReference>
<dbReference type="SUPFAM" id="SSF100920">
    <property type="entry name" value="Heat shock protein 70kD (HSP70), peptide-binding domain"/>
    <property type="match status" value="1"/>
</dbReference>
<dbReference type="PROSITE" id="PS00297">
    <property type="entry name" value="HSP70_1"/>
    <property type="match status" value="1"/>
</dbReference>
<dbReference type="PROSITE" id="PS00329">
    <property type="entry name" value="HSP70_2"/>
    <property type="match status" value="1"/>
</dbReference>
<dbReference type="PROSITE" id="PS01036">
    <property type="entry name" value="HSP70_3"/>
    <property type="match status" value="1"/>
</dbReference>
<accession>Q83QK4</accession>
<keyword id="KW-0067">ATP-binding</keyword>
<keyword id="KW-0143">Chaperone</keyword>
<keyword id="KW-0547">Nucleotide-binding</keyword>
<keyword id="KW-1185">Reference proteome</keyword>
<feature type="chain" id="PRO_0000078650" description="Chaperone protein HscA homolog">
    <location>
        <begin position="1"/>
        <end position="616"/>
    </location>
</feature>
<organism>
    <name type="scientific">Shigella flexneri</name>
    <dbReference type="NCBI Taxonomy" id="623"/>
    <lineage>
        <taxon>Bacteria</taxon>
        <taxon>Pseudomonadati</taxon>
        <taxon>Pseudomonadota</taxon>
        <taxon>Gammaproteobacteria</taxon>
        <taxon>Enterobacterales</taxon>
        <taxon>Enterobacteriaceae</taxon>
        <taxon>Shigella</taxon>
    </lineage>
</organism>
<proteinExistence type="inferred from homology"/>
<name>HSCA_SHIFL</name>
<sequence length="616" mass="65740">MALLQISEPGLSAAPHQRRLAAGIDLGTTNSLVATVRSGQAETLADHEGRHLLPSVVHYQQQGHSVGYDARTNAALDTANTISSVKRLMGRSLADIQQRYPHLPYQFQASENGLPMIETAAGLLNPVRVSADILKALAARATEALAGELDGVVITVPAYFDDAQRQGTKDAARLAGLHVLRLLNEPTAAAIAYGLDSGQEGVIAVYDLGGGTFDISILRLSRGVFEVLATGGDSALGGDDFDHLLADYIREQADIPDRSDNRVQRELLDATIAAKIALSDADSVTVNVAGWQGEISREQFNELIAPLVKRTLLACRRALKDAGVEADEVLEVVMVGGSTRVPLVRERVGEFFGRPPLTSIDPDKVVAIGAAIQADILVGNKPDSEMLLLDVIPLSLGLETMGGLVEKVIPRNTTIPVARAQDFTTFKDGQTAMSIHVMQGERELVQDCRSLARFALRGIPALPAGGAHIRVTFQVDADGLLSVTAMEKSTGVEASIQVKPSYGLTDSEIASMIKDSMSYAEQDVKARMLAEQKVEAARVLESLHGALAADAALLSAAERQVIDNAAAHLSEVAQGDDVDAIEQAIKNVDKQTQDFAARRMDQSVRRALKGHSVDEV</sequence>
<evidence type="ECO:0000255" key="1">
    <source>
        <dbReference type="HAMAP-Rule" id="MF_00679"/>
    </source>
</evidence>